<keyword id="KW-0133">Cell shape</keyword>
<keyword id="KW-0961">Cell wall biogenesis/degradation</keyword>
<keyword id="KW-0413">Isomerase</keyword>
<keyword id="KW-0573">Peptidoglycan synthesis</keyword>
<keyword id="KW-1185">Reference proteome</keyword>
<feature type="chain" id="PRO_1000125622" description="Glutamate racemase">
    <location>
        <begin position="1"/>
        <end position="264"/>
    </location>
</feature>
<feature type="active site" description="Proton donor/acceptor" evidence="1">
    <location>
        <position position="73"/>
    </location>
</feature>
<feature type="active site" description="Proton donor/acceptor" evidence="1">
    <location>
        <position position="183"/>
    </location>
</feature>
<feature type="binding site" evidence="1">
    <location>
        <begin position="10"/>
        <end position="11"/>
    </location>
    <ligand>
        <name>substrate</name>
    </ligand>
</feature>
<feature type="binding site" evidence="1">
    <location>
        <begin position="42"/>
        <end position="43"/>
    </location>
    <ligand>
        <name>substrate</name>
    </ligand>
</feature>
<feature type="binding site" evidence="1">
    <location>
        <begin position="74"/>
        <end position="75"/>
    </location>
    <ligand>
        <name>substrate</name>
    </ligand>
</feature>
<feature type="binding site" evidence="1">
    <location>
        <begin position="184"/>
        <end position="185"/>
    </location>
    <ligand>
        <name>substrate</name>
    </ligand>
</feature>
<organism>
    <name type="scientific">Streptococcus uberis (strain ATCC BAA-854 / 0140J)</name>
    <dbReference type="NCBI Taxonomy" id="218495"/>
    <lineage>
        <taxon>Bacteria</taxon>
        <taxon>Bacillati</taxon>
        <taxon>Bacillota</taxon>
        <taxon>Bacilli</taxon>
        <taxon>Lactobacillales</taxon>
        <taxon>Streptococcaceae</taxon>
        <taxon>Streptococcus</taxon>
    </lineage>
</organism>
<gene>
    <name evidence="1" type="primary">murI</name>
    <name type="ordered locus">SUB0400</name>
</gene>
<comment type="function">
    <text evidence="1">Provides the (R)-glutamate required for cell wall biosynthesis.</text>
</comment>
<comment type="catalytic activity">
    <reaction evidence="1">
        <text>L-glutamate = D-glutamate</text>
        <dbReference type="Rhea" id="RHEA:12813"/>
        <dbReference type="ChEBI" id="CHEBI:29985"/>
        <dbReference type="ChEBI" id="CHEBI:29986"/>
        <dbReference type="EC" id="5.1.1.3"/>
    </reaction>
</comment>
<comment type="pathway">
    <text evidence="1">Cell wall biogenesis; peptidoglycan biosynthesis.</text>
</comment>
<comment type="similarity">
    <text evidence="1">Belongs to the aspartate/glutamate racemases family.</text>
</comment>
<reference key="1">
    <citation type="journal article" date="2009" name="BMC Genomics">
        <title>Evidence for niche adaptation in the genome of the bovine pathogen Streptococcus uberis.</title>
        <authorList>
            <person name="Ward P.N."/>
            <person name="Holden M.T.G."/>
            <person name="Leigh J.A."/>
            <person name="Lennard N."/>
            <person name="Bignell A."/>
            <person name="Barron A."/>
            <person name="Clark L."/>
            <person name="Quail M.A."/>
            <person name="Woodward J."/>
            <person name="Barrell B.G."/>
            <person name="Egan S.A."/>
            <person name="Field T.R."/>
            <person name="Maskell D."/>
            <person name="Kehoe M."/>
            <person name="Dowson C.G."/>
            <person name="Chanter N."/>
            <person name="Whatmore A.M."/>
            <person name="Bentley S.D."/>
            <person name="Parkhill J."/>
        </authorList>
    </citation>
    <scope>NUCLEOTIDE SEQUENCE [LARGE SCALE GENOMIC DNA]</scope>
    <source>
        <strain>ATCC BAA-854 / 0140J</strain>
    </source>
</reference>
<protein>
    <recommendedName>
        <fullName evidence="1">Glutamate racemase</fullName>
        <ecNumber evidence="1">5.1.1.3</ecNumber>
    </recommendedName>
</protein>
<dbReference type="EC" id="5.1.1.3" evidence="1"/>
<dbReference type="EMBL" id="AM946015">
    <property type="protein sequence ID" value="CAR41037.1"/>
    <property type="molecule type" value="Genomic_DNA"/>
</dbReference>
<dbReference type="SMR" id="B9DTR9"/>
<dbReference type="STRING" id="218495.SUB0400"/>
<dbReference type="KEGG" id="sub:SUB0400"/>
<dbReference type="eggNOG" id="COG0796">
    <property type="taxonomic scope" value="Bacteria"/>
</dbReference>
<dbReference type="HOGENOM" id="CLU_052344_0_2_9"/>
<dbReference type="OrthoDB" id="9801055at2"/>
<dbReference type="UniPathway" id="UPA00219"/>
<dbReference type="Proteomes" id="UP000000449">
    <property type="component" value="Chromosome"/>
</dbReference>
<dbReference type="GO" id="GO:0008881">
    <property type="term" value="F:glutamate racemase activity"/>
    <property type="evidence" value="ECO:0007669"/>
    <property type="project" value="UniProtKB-UniRule"/>
</dbReference>
<dbReference type="GO" id="GO:0071555">
    <property type="term" value="P:cell wall organization"/>
    <property type="evidence" value="ECO:0007669"/>
    <property type="project" value="UniProtKB-KW"/>
</dbReference>
<dbReference type="GO" id="GO:0009252">
    <property type="term" value="P:peptidoglycan biosynthetic process"/>
    <property type="evidence" value="ECO:0007669"/>
    <property type="project" value="UniProtKB-UniRule"/>
</dbReference>
<dbReference type="GO" id="GO:0008360">
    <property type="term" value="P:regulation of cell shape"/>
    <property type="evidence" value="ECO:0007669"/>
    <property type="project" value="UniProtKB-KW"/>
</dbReference>
<dbReference type="FunFam" id="3.40.50.1860:FF:000002">
    <property type="entry name" value="Glutamate racemase"/>
    <property type="match status" value="1"/>
</dbReference>
<dbReference type="Gene3D" id="3.40.50.1860">
    <property type="match status" value="2"/>
</dbReference>
<dbReference type="HAMAP" id="MF_00258">
    <property type="entry name" value="Glu_racemase"/>
    <property type="match status" value="1"/>
</dbReference>
<dbReference type="InterPro" id="IPR015942">
    <property type="entry name" value="Asp/Glu/hydantoin_racemase"/>
</dbReference>
<dbReference type="InterPro" id="IPR001920">
    <property type="entry name" value="Asp/Glu_race"/>
</dbReference>
<dbReference type="InterPro" id="IPR033134">
    <property type="entry name" value="Asp/Glu_racemase_AS_2"/>
</dbReference>
<dbReference type="InterPro" id="IPR004391">
    <property type="entry name" value="Glu_race"/>
</dbReference>
<dbReference type="NCBIfam" id="TIGR00067">
    <property type="entry name" value="glut_race"/>
    <property type="match status" value="1"/>
</dbReference>
<dbReference type="NCBIfam" id="NF002035">
    <property type="entry name" value="PRK00865.1-3"/>
    <property type="match status" value="1"/>
</dbReference>
<dbReference type="PANTHER" id="PTHR21198">
    <property type="entry name" value="GLUTAMATE RACEMASE"/>
    <property type="match status" value="1"/>
</dbReference>
<dbReference type="PANTHER" id="PTHR21198:SF2">
    <property type="entry name" value="GLUTAMATE RACEMASE"/>
    <property type="match status" value="1"/>
</dbReference>
<dbReference type="Pfam" id="PF01177">
    <property type="entry name" value="Asp_Glu_race"/>
    <property type="match status" value="1"/>
</dbReference>
<dbReference type="SUPFAM" id="SSF53681">
    <property type="entry name" value="Aspartate/glutamate racemase"/>
    <property type="match status" value="2"/>
</dbReference>
<dbReference type="PROSITE" id="PS00924">
    <property type="entry name" value="ASP_GLU_RACEMASE_2"/>
    <property type="match status" value="1"/>
</dbReference>
<name>MURI_STRU0</name>
<sequence length="264" mass="28951">MDNRPIGFLDSGVGGLTVVRELMRQLPHESIVYVGDSARAPYGPRPADQIREFTWELVNFLLTKNVKMIVFACNTATAVAWEEVKNALSIPVLGVILPGSSAAIKSTTSGKVGVIGTPMTIQSDIYRQKIQLLAPQIEVLSLACPKFVPIVESNETKSSVAKKIVYETLEPLVGKVDTLVLGCTHYPLLRPIIQNVMGSEVTLIDSGAECIRDISVLLNYFQINASREEKKADNLFFTTAGTDTFKEIANAWLEESIDVEHTDL</sequence>
<evidence type="ECO:0000255" key="1">
    <source>
        <dbReference type="HAMAP-Rule" id="MF_00258"/>
    </source>
</evidence>
<proteinExistence type="inferred from homology"/>
<accession>B9DTR9</accession>